<proteinExistence type="inferred from homology"/>
<protein>
    <recommendedName>
        <fullName evidence="1">Kynurenine formamidase</fullName>
        <shortName evidence="1">KFA</shortName>
        <shortName evidence="1">KFase</shortName>
        <ecNumber evidence="1">3.5.1.9</ecNumber>
    </recommendedName>
    <alternativeName>
        <fullName evidence="1">Arylformamidase</fullName>
    </alternativeName>
    <alternativeName>
        <fullName evidence="1">N-formylkynurenine formamidase</fullName>
        <shortName evidence="1">FKF</shortName>
    </alternativeName>
</protein>
<evidence type="ECO:0000255" key="1">
    <source>
        <dbReference type="HAMAP-Rule" id="MF_01969"/>
    </source>
</evidence>
<sequence length="213" mass="23125">MTSLRYWDISPALDPSTPTWPGDTPFQQEWAARLDEQCPVNVGRITLSPHTGAHVDGPLHYRADGLPIGQVPLDIYMGPCRVIHCIGANPLVTPEHLAGQLDDLPSRVLLRTFERVPANWPEGFCAIAPATIECLAERGVRLVGIDTPSLDPQHSKTLDAHHAVGRHGMAILEGVVLDDVPAGDYELLALPLKFTHLDASPVRAVLRALPTAE</sequence>
<name>KYNB_PSEAB</name>
<feature type="chain" id="PRO_0000362129" description="Kynurenine formamidase">
    <location>
        <begin position="1"/>
        <end position="213"/>
    </location>
</feature>
<feature type="active site" description="Proton donor/acceptor" evidence="1">
    <location>
        <position position="60"/>
    </location>
</feature>
<feature type="binding site" evidence="1">
    <location>
        <position position="20"/>
    </location>
    <ligand>
        <name>substrate</name>
    </ligand>
</feature>
<feature type="binding site" evidence="1">
    <location>
        <position position="50"/>
    </location>
    <ligand>
        <name>Zn(2+)</name>
        <dbReference type="ChEBI" id="CHEBI:29105"/>
        <label>1</label>
    </ligand>
</feature>
<feature type="binding site" evidence="1">
    <location>
        <position position="54"/>
    </location>
    <ligand>
        <name>Zn(2+)</name>
        <dbReference type="ChEBI" id="CHEBI:29105"/>
        <label>1</label>
    </ligand>
</feature>
<feature type="binding site" evidence="1">
    <location>
        <position position="56"/>
    </location>
    <ligand>
        <name>Zn(2+)</name>
        <dbReference type="ChEBI" id="CHEBI:29105"/>
        <label>1</label>
    </ligand>
</feature>
<feature type="binding site" evidence="1">
    <location>
        <position position="56"/>
    </location>
    <ligand>
        <name>Zn(2+)</name>
        <dbReference type="ChEBI" id="CHEBI:29105"/>
        <label>2</label>
    </ligand>
</feature>
<feature type="binding site" evidence="1">
    <location>
        <position position="161"/>
    </location>
    <ligand>
        <name>Zn(2+)</name>
        <dbReference type="ChEBI" id="CHEBI:29105"/>
        <label>2</label>
    </ligand>
</feature>
<feature type="binding site" evidence="1">
    <location>
        <position position="173"/>
    </location>
    <ligand>
        <name>Zn(2+)</name>
        <dbReference type="ChEBI" id="CHEBI:29105"/>
        <label>1</label>
    </ligand>
</feature>
<feature type="binding site" evidence="1">
    <location>
        <position position="173"/>
    </location>
    <ligand>
        <name>Zn(2+)</name>
        <dbReference type="ChEBI" id="CHEBI:29105"/>
        <label>2</label>
    </ligand>
</feature>
<comment type="function">
    <text evidence="1">Catalyzes the hydrolysis of N-formyl-L-kynurenine to L-kynurenine, the second step in the kynurenine pathway of tryptophan degradation.</text>
</comment>
<comment type="catalytic activity">
    <reaction evidence="1">
        <text>N-formyl-L-kynurenine + H2O = L-kynurenine + formate + H(+)</text>
        <dbReference type="Rhea" id="RHEA:13009"/>
        <dbReference type="ChEBI" id="CHEBI:15377"/>
        <dbReference type="ChEBI" id="CHEBI:15378"/>
        <dbReference type="ChEBI" id="CHEBI:15740"/>
        <dbReference type="ChEBI" id="CHEBI:57959"/>
        <dbReference type="ChEBI" id="CHEBI:58629"/>
        <dbReference type="EC" id="3.5.1.9"/>
    </reaction>
</comment>
<comment type="cofactor">
    <cofactor evidence="1">
        <name>Zn(2+)</name>
        <dbReference type="ChEBI" id="CHEBI:29105"/>
    </cofactor>
    <text evidence="1">Binds 2 zinc ions per subunit.</text>
</comment>
<comment type="pathway">
    <text evidence="1">Amino-acid degradation; L-tryptophan degradation via kynurenine pathway; L-kynurenine from L-tryptophan: step 2/2.</text>
</comment>
<comment type="subunit">
    <text evidence="1">Homodimer.</text>
</comment>
<comment type="similarity">
    <text evidence="1">Belongs to the Cyclase 1 superfamily. KynB family.</text>
</comment>
<organism>
    <name type="scientific">Pseudomonas aeruginosa (strain UCBPP-PA14)</name>
    <dbReference type="NCBI Taxonomy" id="208963"/>
    <lineage>
        <taxon>Bacteria</taxon>
        <taxon>Pseudomonadati</taxon>
        <taxon>Pseudomonadota</taxon>
        <taxon>Gammaproteobacteria</taxon>
        <taxon>Pseudomonadales</taxon>
        <taxon>Pseudomonadaceae</taxon>
        <taxon>Pseudomonas</taxon>
    </lineage>
</organism>
<gene>
    <name evidence="1" type="primary">kynB</name>
    <name type="ordered locus">PA14_37590</name>
</gene>
<dbReference type="EC" id="3.5.1.9" evidence="1"/>
<dbReference type="EMBL" id="CP000438">
    <property type="protein sequence ID" value="ABJ11264.1"/>
    <property type="molecule type" value="Genomic_DNA"/>
</dbReference>
<dbReference type="RefSeq" id="WP_003139623.1">
    <property type="nucleotide sequence ID" value="NZ_CP034244.1"/>
</dbReference>
<dbReference type="SMR" id="Q02LM8"/>
<dbReference type="KEGG" id="pau:PA14_37590"/>
<dbReference type="PseudoCAP" id="PA14_37590"/>
<dbReference type="HOGENOM" id="CLU_030671_3_1_6"/>
<dbReference type="BioCyc" id="PAER208963:G1G74-3161-MONOMER"/>
<dbReference type="UniPathway" id="UPA00333">
    <property type="reaction ID" value="UER00454"/>
</dbReference>
<dbReference type="Proteomes" id="UP000000653">
    <property type="component" value="Chromosome"/>
</dbReference>
<dbReference type="GO" id="GO:0004061">
    <property type="term" value="F:arylformamidase activity"/>
    <property type="evidence" value="ECO:0000250"/>
    <property type="project" value="UniProtKB"/>
</dbReference>
<dbReference type="GO" id="GO:0004328">
    <property type="term" value="F:formamidase activity"/>
    <property type="evidence" value="ECO:0007669"/>
    <property type="project" value="InterPro"/>
</dbReference>
<dbReference type="GO" id="GO:0008270">
    <property type="term" value="F:zinc ion binding"/>
    <property type="evidence" value="ECO:0007669"/>
    <property type="project" value="UniProtKB-UniRule"/>
</dbReference>
<dbReference type="GO" id="GO:0043420">
    <property type="term" value="P:anthranilate metabolic process"/>
    <property type="evidence" value="ECO:0000250"/>
    <property type="project" value="UniProtKB"/>
</dbReference>
<dbReference type="GO" id="GO:0019441">
    <property type="term" value="P:L-tryptophan catabolic process to kynurenine"/>
    <property type="evidence" value="ECO:0000250"/>
    <property type="project" value="UniProtKB"/>
</dbReference>
<dbReference type="FunFam" id="3.50.30.50:FF:000001">
    <property type="entry name" value="Kynurenine formamidase"/>
    <property type="match status" value="1"/>
</dbReference>
<dbReference type="Gene3D" id="3.50.30.50">
    <property type="entry name" value="Putative cyclase"/>
    <property type="match status" value="1"/>
</dbReference>
<dbReference type="HAMAP" id="MF_01969">
    <property type="entry name" value="KynB"/>
    <property type="match status" value="1"/>
</dbReference>
<dbReference type="InterPro" id="IPR007325">
    <property type="entry name" value="KFase/CYL"/>
</dbReference>
<dbReference type="InterPro" id="IPR037175">
    <property type="entry name" value="KFase_sf"/>
</dbReference>
<dbReference type="InterPro" id="IPR017484">
    <property type="entry name" value="Kynurenine_formamidase_bac"/>
</dbReference>
<dbReference type="NCBIfam" id="TIGR03035">
    <property type="entry name" value="trp_arylform"/>
    <property type="match status" value="1"/>
</dbReference>
<dbReference type="PANTHER" id="PTHR31118">
    <property type="entry name" value="CYCLASE-LIKE PROTEIN 2"/>
    <property type="match status" value="1"/>
</dbReference>
<dbReference type="PANTHER" id="PTHR31118:SF32">
    <property type="entry name" value="KYNURENINE FORMAMIDASE"/>
    <property type="match status" value="1"/>
</dbReference>
<dbReference type="Pfam" id="PF04199">
    <property type="entry name" value="Cyclase"/>
    <property type="match status" value="1"/>
</dbReference>
<dbReference type="SUPFAM" id="SSF102198">
    <property type="entry name" value="Putative cyclase"/>
    <property type="match status" value="1"/>
</dbReference>
<accession>Q02LM8</accession>
<reference key="1">
    <citation type="journal article" date="2006" name="Genome Biol.">
        <title>Genomic analysis reveals that Pseudomonas aeruginosa virulence is combinatorial.</title>
        <authorList>
            <person name="Lee D.G."/>
            <person name="Urbach J.M."/>
            <person name="Wu G."/>
            <person name="Liberati N.T."/>
            <person name="Feinbaum R.L."/>
            <person name="Miyata S."/>
            <person name="Diggins L.T."/>
            <person name="He J."/>
            <person name="Saucier M."/>
            <person name="Deziel E."/>
            <person name="Friedman L."/>
            <person name="Li L."/>
            <person name="Grills G."/>
            <person name="Montgomery K."/>
            <person name="Kucherlapati R."/>
            <person name="Rahme L.G."/>
            <person name="Ausubel F.M."/>
        </authorList>
    </citation>
    <scope>NUCLEOTIDE SEQUENCE [LARGE SCALE GENOMIC DNA]</scope>
    <source>
        <strain>UCBPP-PA14</strain>
    </source>
</reference>
<keyword id="KW-0378">Hydrolase</keyword>
<keyword id="KW-0479">Metal-binding</keyword>
<keyword id="KW-0823">Tryptophan catabolism</keyword>
<keyword id="KW-0862">Zinc</keyword>